<comment type="function">
    <text evidence="1">Catalyzes the irreversible cleavage of the glycosidic bond in both 5'-methylthioadenosine (MTA) and S-adenosylhomocysteine (SAH/AdoHcy) to adenine and the corresponding thioribose, 5'-methylthioribose and S-ribosylhomocysteine, respectively. Also cleaves 5'-deoxyadenosine, a toxic by-product of radical S-adenosylmethionine (SAM) enzymes, into 5-deoxyribose and adenine. Thus, is required for in vivo function of the radical SAM enzymes biotin synthase and lipoic acid synthase, that are inhibited by 5'-deoxyadenosine accumulation.</text>
</comment>
<comment type="catalytic activity">
    <reaction evidence="1">
        <text>S-adenosyl-L-homocysteine + H2O = S-(5-deoxy-D-ribos-5-yl)-L-homocysteine + adenine</text>
        <dbReference type="Rhea" id="RHEA:17805"/>
        <dbReference type="ChEBI" id="CHEBI:15377"/>
        <dbReference type="ChEBI" id="CHEBI:16708"/>
        <dbReference type="ChEBI" id="CHEBI:57856"/>
        <dbReference type="ChEBI" id="CHEBI:58195"/>
        <dbReference type="EC" id="3.2.2.9"/>
    </reaction>
</comment>
<comment type="catalytic activity">
    <reaction evidence="1">
        <text>S-methyl-5'-thioadenosine + H2O = 5-(methylsulfanyl)-D-ribose + adenine</text>
        <dbReference type="Rhea" id="RHEA:13617"/>
        <dbReference type="ChEBI" id="CHEBI:15377"/>
        <dbReference type="ChEBI" id="CHEBI:16708"/>
        <dbReference type="ChEBI" id="CHEBI:17509"/>
        <dbReference type="ChEBI" id="CHEBI:78440"/>
        <dbReference type="EC" id="3.2.2.9"/>
    </reaction>
</comment>
<comment type="catalytic activity">
    <reaction evidence="1">
        <text>5'-deoxyadenosine + H2O = 5-deoxy-D-ribose + adenine</text>
        <dbReference type="Rhea" id="RHEA:29859"/>
        <dbReference type="ChEBI" id="CHEBI:15377"/>
        <dbReference type="ChEBI" id="CHEBI:16708"/>
        <dbReference type="ChEBI" id="CHEBI:17319"/>
        <dbReference type="ChEBI" id="CHEBI:149540"/>
        <dbReference type="EC" id="3.2.2.9"/>
    </reaction>
    <physiologicalReaction direction="left-to-right" evidence="1">
        <dbReference type="Rhea" id="RHEA:29860"/>
    </physiologicalReaction>
</comment>
<comment type="pathway">
    <text evidence="1">Amino-acid biosynthesis; L-methionine biosynthesis via salvage pathway; S-methyl-5-thio-alpha-D-ribose 1-phosphate from S-methyl-5'-thioadenosine (hydrolase route): step 1/2.</text>
</comment>
<comment type="subunit">
    <text evidence="1">Homodimer.</text>
</comment>
<comment type="similarity">
    <text evidence="1">Belongs to the PNP/UDP phosphorylase family. MtnN subfamily.</text>
</comment>
<evidence type="ECO:0000255" key="1">
    <source>
        <dbReference type="HAMAP-Rule" id="MF_01684"/>
    </source>
</evidence>
<sequence length="232" mass="24588">MKIGIIGAMEEEVTLLRDKIENRQTLTLGGCEIYTGQLNGTDVALLKSGIGKVAAALGATLLLEHCKPDVIINTGSAGGLASTLKVGDIVVSDEARYHDADVTAFGYEYGQLPGCPAGFKADDKLIAAAEYCIRELNLNAVRGLIVSGDAFINGSVGLAKIRHNFPNAVAVEMEATAIAHVCYNFKVPFVVVRAISDVADQQSHLNFDEFLAVAAKQSTLMVETLVQKLAHG</sequence>
<gene>
    <name evidence="1" type="primary">mtnN</name>
    <name type="ordered locus">SARI_02797</name>
</gene>
<feature type="chain" id="PRO_0000359327" description="5'-methylthioadenosine/S-adenosylhomocysteine nucleosidase">
    <location>
        <begin position="1"/>
        <end position="232"/>
    </location>
</feature>
<feature type="active site" description="Proton acceptor" evidence="1">
    <location>
        <position position="12"/>
    </location>
</feature>
<feature type="active site" description="Proton donor" evidence="1">
    <location>
        <position position="197"/>
    </location>
</feature>
<feature type="binding site" evidence="1">
    <location>
        <position position="78"/>
    </location>
    <ligand>
        <name>substrate</name>
    </ligand>
</feature>
<feature type="binding site" evidence="1">
    <location>
        <position position="152"/>
    </location>
    <ligand>
        <name>substrate</name>
    </ligand>
</feature>
<feature type="binding site" evidence="1">
    <location>
        <begin position="173"/>
        <end position="174"/>
    </location>
    <ligand>
        <name>substrate</name>
    </ligand>
</feature>
<protein>
    <recommendedName>
        <fullName evidence="1">5'-methylthioadenosine/S-adenosylhomocysteine nucleosidase</fullName>
        <shortName evidence="1">MTA/SAH nucleosidase</shortName>
        <shortName evidence="1">MTAN</shortName>
        <ecNumber evidence="1">3.2.2.9</ecNumber>
    </recommendedName>
    <alternativeName>
        <fullName evidence="1">5'-deoxyadenosine nucleosidase</fullName>
        <shortName evidence="1">DOA nucleosidase</shortName>
        <shortName evidence="1">dAdo nucleosidase</shortName>
    </alternativeName>
    <alternativeName>
        <fullName evidence="1">5'-methylthioadenosine nucleosidase</fullName>
        <shortName evidence="1">MTA nucleosidase</shortName>
    </alternativeName>
    <alternativeName>
        <fullName evidence="1">S-adenosylhomocysteine nucleosidase</fullName>
        <shortName evidence="1">AdoHcy nucleosidase</shortName>
        <shortName evidence="1">SAH nucleosidase</shortName>
        <shortName evidence="1">SRH nucleosidase</shortName>
    </alternativeName>
</protein>
<accession>A9MPK2</accession>
<dbReference type="EC" id="3.2.2.9" evidence="1"/>
<dbReference type="EMBL" id="CP000880">
    <property type="protein sequence ID" value="ABX22645.1"/>
    <property type="molecule type" value="Genomic_DNA"/>
</dbReference>
<dbReference type="SMR" id="A9MPK2"/>
<dbReference type="STRING" id="41514.SARI_02797"/>
<dbReference type="KEGG" id="ses:SARI_02797"/>
<dbReference type="HOGENOM" id="CLU_031248_2_2_6"/>
<dbReference type="UniPathway" id="UPA00904">
    <property type="reaction ID" value="UER00871"/>
</dbReference>
<dbReference type="Proteomes" id="UP000002084">
    <property type="component" value="Chromosome"/>
</dbReference>
<dbReference type="GO" id="GO:0005829">
    <property type="term" value="C:cytosol"/>
    <property type="evidence" value="ECO:0007669"/>
    <property type="project" value="TreeGrafter"/>
</dbReference>
<dbReference type="GO" id="GO:0008782">
    <property type="term" value="F:adenosylhomocysteine nucleosidase activity"/>
    <property type="evidence" value="ECO:0007669"/>
    <property type="project" value="UniProtKB-UniRule"/>
</dbReference>
<dbReference type="GO" id="GO:0008930">
    <property type="term" value="F:methylthioadenosine nucleosidase activity"/>
    <property type="evidence" value="ECO:0007669"/>
    <property type="project" value="UniProtKB-UniRule"/>
</dbReference>
<dbReference type="GO" id="GO:0019509">
    <property type="term" value="P:L-methionine salvage from methylthioadenosine"/>
    <property type="evidence" value="ECO:0007669"/>
    <property type="project" value="UniProtKB-UniRule"/>
</dbReference>
<dbReference type="GO" id="GO:0019284">
    <property type="term" value="P:L-methionine salvage from S-adenosylmethionine"/>
    <property type="evidence" value="ECO:0007669"/>
    <property type="project" value="TreeGrafter"/>
</dbReference>
<dbReference type="GO" id="GO:0046124">
    <property type="term" value="P:purine deoxyribonucleoside catabolic process"/>
    <property type="evidence" value="ECO:0007669"/>
    <property type="project" value="UniProtKB-UniRule"/>
</dbReference>
<dbReference type="CDD" id="cd09008">
    <property type="entry name" value="MTAN"/>
    <property type="match status" value="1"/>
</dbReference>
<dbReference type="FunFam" id="3.40.50.1580:FF:000001">
    <property type="entry name" value="MTA/SAH nucleosidase family protein"/>
    <property type="match status" value="1"/>
</dbReference>
<dbReference type="Gene3D" id="3.40.50.1580">
    <property type="entry name" value="Nucleoside phosphorylase domain"/>
    <property type="match status" value="1"/>
</dbReference>
<dbReference type="HAMAP" id="MF_01684">
    <property type="entry name" value="Salvage_MtnN"/>
    <property type="match status" value="1"/>
</dbReference>
<dbReference type="InterPro" id="IPR010049">
    <property type="entry name" value="MTA_SAH_Nsdase"/>
</dbReference>
<dbReference type="InterPro" id="IPR000845">
    <property type="entry name" value="Nucleoside_phosphorylase_d"/>
</dbReference>
<dbReference type="InterPro" id="IPR035994">
    <property type="entry name" value="Nucleoside_phosphorylase_sf"/>
</dbReference>
<dbReference type="NCBIfam" id="TIGR01704">
    <property type="entry name" value="MTA_SAH-Nsdase"/>
    <property type="match status" value="1"/>
</dbReference>
<dbReference type="NCBIfam" id="NF004079">
    <property type="entry name" value="PRK05584.1"/>
    <property type="match status" value="1"/>
</dbReference>
<dbReference type="PANTHER" id="PTHR46832">
    <property type="entry name" value="5'-METHYLTHIOADENOSINE/S-ADENOSYLHOMOCYSTEINE NUCLEOSIDASE"/>
    <property type="match status" value="1"/>
</dbReference>
<dbReference type="PANTHER" id="PTHR46832:SF1">
    <property type="entry name" value="5'-METHYLTHIOADENOSINE_S-ADENOSYLHOMOCYSTEINE NUCLEOSIDASE"/>
    <property type="match status" value="1"/>
</dbReference>
<dbReference type="Pfam" id="PF01048">
    <property type="entry name" value="PNP_UDP_1"/>
    <property type="match status" value="1"/>
</dbReference>
<dbReference type="SUPFAM" id="SSF53167">
    <property type="entry name" value="Purine and uridine phosphorylases"/>
    <property type="match status" value="1"/>
</dbReference>
<proteinExistence type="inferred from homology"/>
<reference key="1">
    <citation type="submission" date="2007-11" db="EMBL/GenBank/DDBJ databases">
        <authorList>
            <consortium name="The Salmonella enterica serovar Arizonae Genome Sequencing Project"/>
            <person name="McClelland M."/>
            <person name="Sanderson E.K."/>
            <person name="Porwollik S."/>
            <person name="Spieth J."/>
            <person name="Clifton W.S."/>
            <person name="Fulton R."/>
            <person name="Chunyan W."/>
            <person name="Wollam A."/>
            <person name="Shah N."/>
            <person name="Pepin K."/>
            <person name="Bhonagiri V."/>
            <person name="Nash W."/>
            <person name="Johnson M."/>
            <person name="Thiruvilangam P."/>
            <person name="Wilson R."/>
        </authorList>
    </citation>
    <scope>NUCLEOTIDE SEQUENCE [LARGE SCALE GENOMIC DNA]</scope>
    <source>
        <strain>ATCC BAA-731 / CDC346-86 / RSK2980</strain>
    </source>
</reference>
<organism>
    <name type="scientific">Salmonella arizonae (strain ATCC BAA-731 / CDC346-86 / RSK2980)</name>
    <dbReference type="NCBI Taxonomy" id="41514"/>
    <lineage>
        <taxon>Bacteria</taxon>
        <taxon>Pseudomonadati</taxon>
        <taxon>Pseudomonadota</taxon>
        <taxon>Gammaproteobacteria</taxon>
        <taxon>Enterobacterales</taxon>
        <taxon>Enterobacteriaceae</taxon>
        <taxon>Salmonella</taxon>
    </lineage>
</organism>
<name>MTNN_SALAR</name>
<keyword id="KW-0028">Amino-acid biosynthesis</keyword>
<keyword id="KW-0378">Hydrolase</keyword>
<keyword id="KW-0486">Methionine biosynthesis</keyword>
<keyword id="KW-1185">Reference proteome</keyword>